<organism>
    <name type="scientific">Shigella boydii serotype 4 (strain Sb227)</name>
    <dbReference type="NCBI Taxonomy" id="300268"/>
    <lineage>
        <taxon>Bacteria</taxon>
        <taxon>Pseudomonadati</taxon>
        <taxon>Pseudomonadota</taxon>
        <taxon>Gammaproteobacteria</taxon>
        <taxon>Enterobacterales</taxon>
        <taxon>Enterobacteriaceae</taxon>
        <taxon>Shigella</taxon>
    </lineage>
</organism>
<keyword id="KW-0456">Lyase</keyword>
<keyword id="KW-0460">Magnesium</keyword>
<keyword id="KW-0479">Metal-binding</keyword>
<comment type="function">
    <text evidence="1">Catalyzes the reversible retro-aldol cleavage of 2-keto-3-deoxy-L-rhamnonate (KDR) to pyruvate and lactaldehyde.</text>
</comment>
<comment type="catalytic activity">
    <reaction evidence="1">
        <text>2-dehydro-3-deoxy-L-rhamnonate = (S)-lactaldehyde + pyruvate</text>
        <dbReference type="Rhea" id="RHEA:25784"/>
        <dbReference type="ChEBI" id="CHEBI:15361"/>
        <dbReference type="ChEBI" id="CHEBI:18041"/>
        <dbReference type="ChEBI" id="CHEBI:58371"/>
        <dbReference type="EC" id="4.1.2.53"/>
    </reaction>
</comment>
<comment type="cofactor">
    <cofactor evidence="1">
        <name>Mg(2+)</name>
        <dbReference type="ChEBI" id="CHEBI:18420"/>
    </cofactor>
    <text evidence="1">Binds 1 Mg(2+) ion per subunit.</text>
</comment>
<comment type="subunit">
    <text evidence="1">Homohexamer.</text>
</comment>
<comment type="similarity">
    <text evidence="1">Belongs to the HpcH/HpaI aldolase family. KDR aldolase subfamily.</text>
</comment>
<accession>Q31Z78</accession>
<protein>
    <recommendedName>
        <fullName evidence="1">2-keto-3-deoxy-L-rhamnonate aldolase</fullName>
        <shortName evidence="1">KDR aldolase</shortName>
        <ecNumber evidence="1">4.1.2.53</ecNumber>
    </recommendedName>
    <alternativeName>
        <fullName evidence="1">2-dehydro-3-deoxyrhamnonate aldolase</fullName>
    </alternativeName>
</protein>
<reference key="1">
    <citation type="journal article" date="2005" name="Nucleic Acids Res.">
        <title>Genome dynamics and diversity of Shigella species, the etiologic agents of bacillary dysentery.</title>
        <authorList>
            <person name="Yang F."/>
            <person name="Yang J."/>
            <person name="Zhang X."/>
            <person name="Chen L."/>
            <person name="Jiang Y."/>
            <person name="Yan Y."/>
            <person name="Tang X."/>
            <person name="Wang J."/>
            <person name="Xiong Z."/>
            <person name="Dong J."/>
            <person name="Xue Y."/>
            <person name="Zhu Y."/>
            <person name="Xu X."/>
            <person name="Sun L."/>
            <person name="Chen S."/>
            <person name="Nie H."/>
            <person name="Peng J."/>
            <person name="Xu J."/>
            <person name="Wang Y."/>
            <person name="Yuan Z."/>
            <person name="Wen Y."/>
            <person name="Yao Z."/>
            <person name="Shen Y."/>
            <person name="Qiang B."/>
            <person name="Hou Y."/>
            <person name="Yu J."/>
            <person name="Jin Q."/>
        </authorList>
    </citation>
    <scope>NUCLEOTIDE SEQUENCE [LARGE SCALE GENOMIC DNA]</scope>
    <source>
        <strain>Sb227</strain>
    </source>
</reference>
<dbReference type="EC" id="4.1.2.53" evidence="1"/>
<dbReference type="EMBL" id="CP000036">
    <property type="protein sequence ID" value="ABB66630.1"/>
    <property type="molecule type" value="Genomic_DNA"/>
</dbReference>
<dbReference type="SMR" id="Q31Z78"/>
<dbReference type="KEGG" id="sbo:SBO_2049"/>
<dbReference type="HOGENOM" id="CLU_059964_1_0_6"/>
<dbReference type="Proteomes" id="UP000007067">
    <property type="component" value="Chromosome"/>
</dbReference>
<dbReference type="GO" id="GO:0005737">
    <property type="term" value="C:cytoplasm"/>
    <property type="evidence" value="ECO:0007669"/>
    <property type="project" value="TreeGrafter"/>
</dbReference>
<dbReference type="GO" id="GO:0106099">
    <property type="term" value="F:2-keto-3-deoxy-L-rhamnonate aldolase activity"/>
    <property type="evidence" value="ECO:0007669"/>
    <property type="project" value="UniProtKB-EC"/>
</dbReference>
<dbReference type="GO" id="GO:0000287">
    <property type="term" value="F:magnesium ion binding"/>
    <property type="evidence" value="ECO:0007669"/>
    <property type="project" value="UniProtKB-UniRule"/>
</dbReference>
<dbReference type="FunFam" id="3.20.20.60:FF:000004">
    <property type="entry name" value="5-keto-4-deoxy-D-glucarate aldolase"/>
    <property type="match status" value="1"/>
</dbReference>
<dbReference type="Gene3D" id="3.20.20.60">
    <property type="entry name" value="Phosphoenolpyruvate-binding domains"/>
    <property type="match status" value="1"/>
</dbReference>
<dbReference type="HAMAP" id="MF_01290">
    <property type="entry name" value="KDR_aldolase"/>
    <property type="match status" value="1"/>
</dbReference>
<dbReference type="InterPro" id="IPR005000">
    <property type="entry name" value="Aldolase/citrate-lyase_domain"/>
</dbReference>
<dbReference type="InterPro" id="IPR050251">
    <property type="entry name" value="HpcH-HpaI_aldolase"/>
</dbReference>
<dbReference type="InterPro" id="IPR023593">
    <property type="entry name" value="KDR_aldolase"/>
</dbReference>
<dbReference type="InterPro" id="IPR015813">
    <property type="entry name" value="Pyrv/PenolPyrv_kinase-like_dom"/>
</dbReference>
<dbReference type="InterPro" id="IPR040442">
    <property type="entry name" value="Pyrv_kinase-like_dom_sf"/>
</dbReference>
<dbReference type="NCBIfam" id="NF007521">
    <property type="entry name" value="PRK10128.1"/>
    <property type="match status" value="1"/>
</dbReference>
<dbReference type="PANTHER" id="PTHR30502">
    <property type="entry name" value="2-KETO-3-DEOXY-L-RHAMNONATE ALDOLASE"/>
    <property type="match status" value="1"/>
</dbReference>
<dbReference type="PANTHER" id="PTHR30502:SF5">
    <property type="entry name" value="2-KETO-3-DEOXY-L-RHAMNONATE ALDOLASE"/>
    <property type="match status" value="1"/>
</dbReference>
<dbReference type="Pfam" id="PF03328">
    <property type="entry name" value="HpcH_HpaI"/>
    <property type="match status" value="1"/>
</dbReference>
<dbReference type="SUPFAM" id="SSF51621">
    <property type="entry name" value="Phosphoenolpyruvate/pyruvate domain"/>
    <property type="match status" value="1"/>
</dbReference>
<sequence length="267" mass="28910">MNALLTNPFKERLRKGEVQIGLWLSSTTSYMAEIAATSGYDWLLIDGEHAPNTIQDLYHQLQAVAPYASQPVIRPVEGSKSLIKQVLDIGAQTLLIPMVDTADQARQVSSATRYPPYGERGVGASVARAARWGRIENYMAQVNDSLCLLVQVESKTALDNLDEILDVEGIDGVFIGPADLSASLGYPDNAGHPEVQRIIETSIRRIRAAGKAAGFLAVAPDMAQQCLAWGANFVAVGVDTMLYSDALDQRLAMFKSGKNGPRIKGSY</sequence>
<evidence type="ECO:0000255" key="1">
    <source>
        <dbReference type="HAMAP-Rule" id="MF_01290"/>
    </source>
</evidence>
<proteinExistence type="inferred from homology"/>
<gene>
    <name evidence="1" type="primary">rhmA</name>
    <name type="ordered locus">SBO_2049</name>
</gene>
<feature type="chain" id="PRO_0000353178" description="2-keto-3-deoxy-L-rhamnonate aldolase">
    <location>
        <begin position="1"/>
        <end position="267"/>
    </location>
</feature>
<feature type="active site" description="Proton acceptor" evidence="1">
    <location>
        <position position="49"/>
    </location>
</feature>
<feature type="binding site" evidence="1">
    <location>
        <position position="151"/>
    </location>
    <ligand>
        <name>substrate</name>
    </ligand>
</feature>
<feature type="binding site" evidence="1">
    <location>
        <position position="153"/>
    </location>
    <ligand>
        <name>Mg(2+)</name>
        <dbReference type="ChEBI" id="CHEBI:18420"/>
    </ligand>
</feature>
<feature type="binding site" evidence="1">
    <location>
        <position position="178"/>
    </location>
    <ligand>
        <name>substrate</name>
    </ligand>
</feature>
<feature type="binding site" evidence="1">
    <location>
        <position position="179"/>
    </location>
    <ligand>
        <name>Mg(2+)</name>
        <dbReference type="ChEBI" id="CHEBI:18420"/>
    </ligand>
</feature>
<feature type="binding site" evidence="1">
    <location>
        <position position="179"/>
    </location>
    <ligand>
        <name>substrate</name>
    </ligand>
</feature>
<feature type="site" description="Transition state stabilizer" evidence="1">
    <location>
        <position position="74"/>
    </location>
</feature>
<feature type="site" description="Increases basicity of active site His" evidence="1">
    <location>
        <position position="88"/>
    </location>
</feature>
<name>RHMA_SHIBS</name>